<keyword id="KW-0066">ATP synthesis</keyword>
<keyword id="KW-0067">ATP-binding</keyword>
<keyword id="KW-0997">Cell inner membrane</keyword>
<keyword id="KW-1003">Cell membrane</keyword>
<keyword id="KW-0139">CF(1)</keyword>
<keyword id="KW-0375">Hydrogen ion transport</keyword>
<keyword id="KW-0406">Ion transport</keyword>
<keyword id="KW-0472">Membrane</keyword>
<keyword id="KW-0547">Nucleotide-binding</keyword>
<keyword id="KW-1185">Reference proteome</keyword>
<keyword id="KW-1278">Translocase</keyword>
<keyword id="KW-0813">Transport</keyword>
<evidence type="ECO:0000255" key="1">
    <source>
        <dbReference type="HAMAP-Rule" id="MF_01347"/>
    </source>
</evidence>
<evidence type="ECO:0000305" key="2"/>
<name>ATPB1_CHLL3</name>
<feature type="chain" id="PRO_0000254327" description="ATP synthase subunit beta 1">
    <location>
        <begin position="1"/>
        <end position="462"/>
    </location>
</feature>
<feature type="binding site" evidence="1">
    <location>
        <begin position="151"/>
        <end position="158"/>
    </location>
    <ligand>
        <name>ATP</name>
        <dbReference type="ChEBI" id="CHEBI:30616"/>
    </ligand>
</feature>
<protein>
    <recommendedName>
        <fullName evidence="1">ATP synthase subunit beta 1</fullName>
        <ecNumber evidence="1">7.1.2.2</ecNumber>
    </recommendedName>
    <alternativeName>
        <fullName evidence="1">ATP synthase F1 sector subunit beta 1</fullName>
    </alternativeName>
    <alternativeName>
        <fullName evidence="1">F-ATPase subunit beta 1</fullName>
    </alternativeName>
</protein>
<sequence length="462" mass="50147">MQEGKISQIIGPVVDVDFPEGQLPSILDALTITRPDGSRLVLETQQHLGEERVRTVAMESTDGLIRGLSVANTGRPIQAPVGEGVLGRMLNVVGDPIDGRGPVNATKTYSIHRSAPKFEDLSTKAEMFETGIKVIDLLEPYSRGGKTGLFGGAGVGKTVLIMELINNIAKQQSGYSVFAGVGERTREGNDLWHEMMESGVIDKTALVFGQMNEPPGARARVALTGLSIAEYFRDEEHRDVLLFIDNIFRFTQAGSEVSALLGRMPSAVGYQPTLATEMGELQDRITSTKNGSVTSVQAIYVPADDLTDPAPATAFAHLDATTVLSRQIAELGIYPAVDPLDSTSRILDPNVIGDDHYDTAQSVKQILQRYKDLQDIIAILGMDELSDEDKLVVARARKVQRFLSQPFFVAEAFTGLAGKYVKLEDSIKGFKEIIAGKHDNLPEGAFYLVGTIEEAIEKAKTL</sequence>
<gene>
    <name evidence="1" type="primary">atpD1</name>
    <name type="ordered locus">Plut_0021</name>
</gene>
<proteinExistence type="inferred from homology"/>
<reference key="1">
    <citation type="submission" date="2005-08" db="EMBL/GenBank/DDBJ databases">
        <title>Complete sequence of Pelodictyon luteolum DSM 273.</title>
        <authorList>
            <consortium name="US DOE Joint Genome Institute"/>
            <person name="Copeland A."/>
            <person name="Lucas S."/>
            <person name="Lapidus A."/>
            <person name="Barry K."/>
            <person name="Detter J.C."/>
            <person name="Glavina T."/>
            <person name="Hammon N."/>
            <person name="Israni S."/>
            <person name="Pitluck S."/>
            <person name="Bryant D."/>
            <person name="Schmutz J."/>
            <person name="Larimer F."/>
            <person name="Land M."/>
            <person name="Kyrpides N."/>
            <person name="Ivanova N."/>
            <person name="Richardson P."/>
        </authorList>
    </citation>
    <scope>NUCLEOTIDE SEQUENCE [LARGE SCALE GENOMIC DNA]</scope>
    <source>
        <strain>DSM 273 / BCRC 81028 / 2530</strain>
    </source>
</reference>
<accession>Q3B6W8</accession>
<organism>
    <name type="scientific">Chlorobium luteolum (strain DSM 273 / BCRC 81028 / 2530)</name>
    <name type="common">Pelodictyon luteolum</name>
    <dbReference type="NCBI Taxonomy" id="319225"/>
    <lineage>
        <taxon>Bacteria</taxon>
        <taxon>Pseudomonadati</taxon>
        <taxon>Chlorobiota</taxon>
        <taxon>Chlorobiia</taxon>
        <taxon>Chlorobiales</taxon>
        <taxon>Chlorobiaceae</taxon>
        <taxon>Chlorobium/Pelodictyon group</taxon>
        <taxon>Pelodictyon</taxon>
    </lineage>
</organism>
<dbReference type="EC" id="7.1.2.2" evidence="1"/>
<dbReference type="EMBL" id="CP000096">
    <property type="protein sequence ID" value="ABB22913.1"/>
    <property type="status" value="ALT_INIT"/>
    <property type="molecule type" value="Genomic_DNA"/>
</dbReference>
<dbReference type="RefSeq" id="WP_041463700.1">
    <property type="nucleotide sequence ID" value="NC_007512.1"/>
</dbReference>
<dbReference type="SMR" id="Q3B6W8"/>
<dbReference type="STRING" id="319225.Plut_0021"/>
<dbReference type="KEGG" id="plt:Plut_0021"/>
<dbReference type="eggNOG" id="COG0055">
    <property type="taxonomic scope" value="Bacteria"/>
</dbReference>
<dbReference type="HOGENOM" id="CLU_022398_0_2_10"/>
<dbReference type="OrthoDB" id="9801639at2"/>
<dbReference type="Proteomes" id="UP000002709">
    <property type="component" value="Chromosome"/>
</dbReference>
<dbReference type="GO" id="GO:0005886">
    <property type="term" value="C:plasma membrane"/>
    <property type="evidence" value="ECO:0007669"/>
    <property type="project" value="UniProtKB-SubCell"/>
</dbReference>
<dbReference type="GO" id="GO:0045259">
    <property type="term" value="C:proton-transporting ATP synthase complex"/>
    <property type="evidence" value="ECO:0007669"/>
    <property type="project" value="UniProtKB-KW"/>
</dbReference>
<dbReference type="GO" id="GO:0005524">
    <property type="term" value="F:ATP binding"/>
    <property type="evidence" value="ECO:0007669"/>
    <property type="project" value="UniProtKB-UniRule"/>
</dbReference>
<dbReference type="GO" id="GO:0016887">
    <property type="term" value="F:ATP hydrolysis activity"/>
    <property type="evidence" value="ECO:0007669"/>
    <property type="project" value="InterPro"/>
</dbReference>
<dbReference type="GO" id="GO:0046933">
    <property type="term" value="F:proton-transporting ATP synthase activity, rotational mechanism"/>
    <property type="evidence" value="ECO:0007669"/>
    <property type="project" value="UniProtKB-UniRule"/>
</dbReference>
<dbReference type="CDD" id="cd18110">
    <property type="entry name" value="ATP-synt_F1_beta_C"/>
    <property type="match status" value="1"/>
</dbReference>
<dbReference type="CDD" id="cd18115">
    <property type="entry name" value="ATP-synt_F1_beta_N"/>
    <property type="match status" value="1"/>
</dbReference>
<dbReference type="CDD" id="cd01133">
    <property type="entry name" value="F1-ATPase_beta_CD"/>
    <property type="match status" value="1"/>
</dbReference>
<dbReference type="FunFam" id="1.10.1140.10:FF:000001">
    <property type="entry name" value="ATP synthase subunit beta"/>
    <property type="match status" value="1"/>
</dbReference>
<dbReference type="FunFam" id="2.40.10.170:FF:000005">
    <property type="entry name" value="ATP synthase subunit beta"/>
    <property type="match status" value="1"/>
</dbReference>
<dbReference type="FunFam" id="3.40.50.300:FF:000026">
    <property type="entry name" value="ATP synthase subunit beta"/>
    <property type="match status" value="1"/>
</dbReference>
<dbReference type="Gene3D" id="2.40.10.170">
    <property type="match status" value="1"/>
</dbReference>
<dbReference type="Gene3D" id="1.10.1140.10">
    <property type="entry name" value="Bovine Mitochondrial F1-atpase, Atp Synthase Beta Chain, Chain D, domain 3"/>
    <property type="match status" value="1"/>
</dbReference>
<dbReference type="Gene3D" id="3.40.50.300">
    <property type="entry name" value="P-loop containing nucleotide triphosphate hydrolases"/>
    <property type="match status" value="1"/>
</dbReference>
<dbReference type="HAMAP" id="MF_01347">
    <property type="entry name" value="ATP_synth_beta_bact"/>
    <property type="match status" value="1"/>
</dbReference>
<dbReference type="InterPro" id="IPR003593">
    <property type="entry name" value="AAA+_ATPase"/>
</dbReference>
<dbReference type="InterPro" id="IPR055190">
    <property type="entry name" value="ATP-synt_VA_C"/>
</dbReference>
<dbReference type="InterPro" id="IPR005722">
    <property type="entry name" value="ATP_synth_F1_bsu"/>
</dbReference>
<dbReference type="InterPro" id="IPR020003">
    <property type="entry name" value="ATPase_a/bsu_AS"/>
</dbReference>
<dbReference type="InterPro" id="IPR050053">
    <property type="entry name" value="ATPase_alpha/beta_chains"/>
</dbReference>
<dbReference type="InterPro" id="IPR004100">
    <property type="entry name" value="ATPase_F1/V1/A1_a/bsu_N"/>
</dbReference>
<dbReference type="InterPro" id="IPR036121">
    <property type="entry name" value="ATPase_F1/V1/A1_a/bsu_N_sf"/>
</dbReference>
<dbReference type="InterPro" id="IPR000194">
    <property type="entry name" value="ATPase_F1/V1/A1_a/bsu_nucl-bd"/>
</dbReference>
<dbReference type="InterPro" id="IPR024034">
    <property type="entry name" value="ATPase_F1/V1_b/a_C"/>
</dbReference>
<dbReference type="InterPro" id="IPR027417">
    <property type="entry name" value="P-loop_NTPase"/>
</dbReference>
<dbReference type="NCBIfam" id="TIGR01039">
    <property type="entry name" value="atpD"/>
    <property type="match status" value="1"/>
</dbReference>
<dbReference type="PANTHER" id="PTHR15184">
    <property type="entry name" value="ATP SYNTHASE"/>
    <property type="match status" value="1"/>
</dbReference>
<dbReference type="PANTHER" id="PTHR15184:SF71">
    <property type="entry name" value="ATP SYNTHASE SUBUNIT BETA, MITOCHONDRIAL"/>
    <property type="match status" value="1"/>
</dbReference>
<dbReference type="Pfam" id="PF00006">
    <property type="entry name" value="ATP-synt_ab"/>
    <property type="match status" value="1"/>
</dbReference>
<dbReference type="Pfam" id="PF02874">
    <property type="entry name" value="ATP-synt_ab_N"/>
    <property type="match status" value="1"/>
</dbReference>
<dbReference type="Pfam" id="PF22919">
    <property type="entry name" value="ATP-synt_VA_C"/>
    <property type="match status" value="1"/>
</dbReference>
<dbReference type="PIRSF" id="PIRSF039072">
    <property type="entry name" value="ATPase_subunit_beta"/>
    <property type="match status" value="1"/>
</dbReference>
<dbReference type="SMART" id="SM00382">
    <property type="entry name" value="AAA"/>
    <property type="match status" value="1"/>
</dbReference>
<dbReference type="SUPFAM" id="SSF47917">
    <property type="entry name" value="C-terminal domain of alpha and beta subunits of F1 ATP synthase"/>
    <property type="match status" value="1"/>
</dbReference>
<dbReference type="SUPFAM" id="SSF50615">
    <property type="entry name" value="N-terminal domain of alpha and beta subunits of F1 ATP synthase"/>
    <property type="match status" value="1"/>
</dbReference>
<dbReference type="SUPFAM" id="SSF52540">
    <property type="entry name" value="P-loop containing nucleoside triphosphate hydrolases"/>
    <property type="match status" value="1"/>
</dbReference>
<dbReference type="PROSITE" id="PS00152">
    <property type="entry name" value="ATPASE_ALPHA_BETA"/>
    <property type="match status" value="1"/>
</dbReference>
<comment type="function">
    <text evidence="1">Produces ATP from ADP in the presence of a proton gradient across the membrane. The catalytic sites are hosted primarily by the beta subunits.</text>
</comment>
<comment type="catalytic activity">
    <reaction evidence="1">
        <text>ATP + H2O + 4 H(+)(in) = ADP + phosphate + 5 H(+)(out)</text>
        <dbReference type="Rhea" id="RHEA:57720"/>
        <dbReference type="ChEBI" id="CHEBI:15377"/>
        <dbReference type="ChEBI" id="CHEBI:15378"/>
        <dbReference type="ChEBI" id="CHEBI:30616"/>
        <dbReference type="ChEBI" id="CHEBI:43474"/>
        <dbReference type="ChEBI" id="CHEBI:456216"/>
        <dbReference type="EC" id="7.1.2.2"/>
    </reaction>
</comment>
<comment type="subunit">
    <text evidence="1">F-type ATPases have 2 components, CF(1) - the catalytic core - and CF(0) - the membrane proton channel. CF(1) has five subunits: alpha(3), beta(3), gamma(1), delta(1), epsilon(1). CF(0) has four main subunits: a(1), b(1), b'(1) and c(9-12).</text>
</comment>
<comment type="subcellular location">
    <subcellularLocation>
        <location evidence="1">Cell inner membrane</location>
        <topology evidence="1">Peripheral membrane protein</topology>
    </subcellularLocation>
</comment>
<comment type="similarity">
    <text evidence="1">Belongs to the ATPase alpha/beta chains family.</text>
</comment>
<comment type="sequence caution" evidence="2">
    <conflict type="erroneous initiation">
        <sequence resource="EMBL-CDS" id="ABB22913"/>
    </conflict>
</comment>